<keyword id="KW-0963">Cytoplasm</keyword>
<keyword id="KW-0328">Glycosyltransferase</keyword>
<keyword id="KW-0660">Purine salvage</keyword>
<keyword id="KW-0808">Transferase</keyword>
<reference key="1">
    <citation type="submission" date="2006-03" db="EMBL/GenBank/DDBJ databases">
        <title>Complete sequence of Rhodopseudomonas palustris BisB18.</title>
        <authorList>
            <consortium name="US DOE Joint Genome Institute"/>
            <person name="Copeland A."/>
            <person name="Lucas S."/>
            <person name="Lapidus A."/>
            <person name="Barry K."/>
            <person name="Detter J.C."/>
            <person name="Glavina del Rio T."/>
            <person name="Hammon N."/>
            <person name="Israni S."/>
            <person name="Dalin E."/>
            <person name="Tice H."/>
            <person name="Pitluck S."/>
            <person name="Chain P."/>
            <person name="Malfatti S."/>
            <person name="Shin M."/>
            <person name="Vergez L."/>
            <person name="Schmutz J."/>
            <person name="Larimer F."/>
            <person name="Land M."/>
            <person name="Hauser L."/>
            <person name="Pelletier D.A."/>
            <person name="Kyrpides N."/>
            <person name="Anderson I."/>
            <person name="Oda Y."/>
            <person name="Harwood C.S."/>
            <person name="Richardson P."/>
        </authorList>
    </citation>
    <scope>NUCLEOTIDE SEQUENCE [LARGE SCALE GENOMIC DNA]</scope>
    <source>
        <strain>BisB18</strain>
    </source>
</reference>
<feature type="chain" id="PRO_0000321396" description="Adenine phosphoribosyltransferase">
    <location>
        <begin position="1"/>
        <end position="199"/>
    </location>
</feature>
<dbReference type="EC" id="2.4.2.7" evidence="1"/>
<dbReference type="EMBL" id="CP000301">
    <property type="protein sequence ID" value="ABD89910.1"/>
    <property type="molecule type" value="Genomic_DNA"/>
</dbReference>
<dbReference type="SMR" id="Q20Y76"/>
<dbReference type="STRING" id="316056.RPC_4387"/>
<dbReference type="KEGG" id="rpc:RPC_4387"/>
<dbReference type="eggNOG" id="COG0503">
    <property type="taxonomic scope" value="Bacteria"/>
</dbReference>
<dbReference type="HOGENOM" id="CLU_063339_3_0_5"/>
<dbReference type="UniPathway" id="UPA00588">
    <property type="reaction ID" value="UER00646"/>
</dbReference>
<dbReference type="GO" id="GO:0005737">
    <property type="term" value="C:cytoplasm"/>
    <property type="evidence" value="ECO:0007669"/>
    <property type="project" value="UniProtKB-SubCell"/>
</dbReference>
<dbReference type="GO" id="GO:0002055">
    <property type="term" value="F:adenine binding"/>
    <property type="evidence" value="ECO:0007669"/>
    <property type="project" value="TreeGrafter"/>
</dbReference>
<dbReference type="GO" id="GO:0003999">
    <property type="term" value="F:adenine phosphoribosyltransferase activity"/>
    <property type="evidence" value="ECO:0007669"/>
    <property type="project" value="UniProtKB-UniRule"/>
</dbReference>
<dbReference type="GO" id="GO:0016208">
    <property type="term" value="F:AMP binding"/>
    <property type="evidence" value="ECO:0007669"/>
    <property type="project" value="TreeGrafter"/>
</dbReference>
<dbReference type="GO" id="GO:0006168">
    <property type="term" value="P:adenine salvage"/>
    <property type="evidence" value="ECO:0007669"/>
    <property type="project" value="InterPro"/>
</dbReference>
<dbReference type="GO" id="GO:0044209">
    <property type="term" value="P:AMP salvage"/>
    <property type="evidence" value="ECO:0007669"/>
    <property type="project" value="UniProtKB-UniRule"/>
</dbReference>
<dbReference type="GO" id="GO:0006166">
    <property type="term" value="P:purine ribonucleoside salvage"/>
    <property type="evidence" value="ECO:0007669"/>
    <property type="project" value="UniProtKB-KW"/>
</dbReference>
<dbReference type="CDD" id="cd06223">
    <property type="entry name" value="PRTases_typeI"/>
    <property type="match status" value="1"/>
</dbReference>
<dbReference type="FunFam" id="3.40.50.2020:FF:000021">
    <property type="entry name" value="Adenine phosphoribosyltransferase"/>
    <property type="match status" value="1"/>
</dbReference>
<dbReference type="Gene3D" id="3.40.50.2020">
    <property type="match status" value="1"/>
</dbReference>
<dbReference type="HAMAP" id="MF_00004">
    <property type="entry name" value="Aden_phosphoribosyltr"/>
    <property type="match status" value="1"/>
</dbReference>
<dbReference type="InterPro" id="IPR005764">
    <property type="entry name" value="Ade_phspho_trans"/>
</dbReference>
<dbReference type="InterPro" id="IPR000836">
    <property type="entry name" value="PRibTrfase_dom"/>
</dbReference>
<dbReference type="InterPro" id="IPR029057">
    <property type="entry name" value="PRTase-like"/>
</dbReference>
<dbReference type="InterPro" id="IPR050054">
    <property type="entry name" value="UPRTase/APRTase"/>
</dbReference>
<dbReference type="NCBIfam" id="TIGR01090">
    <property type="entry name" value="apt"/>
    <property type="match status" value="1"/>
</dbReference>
<dbReference type="NCBIfam" id="NF002634">
    <property type="entry name" value="PRK02304.1-3"/>
    <property type="match status" value="1"/>
</dbReference>
<dbReference type="NCBIfam" id="NF002636">
    <property type="entry name" value="PRK02304.1-5"/>
    <property type="match status" value="1"/>
</dbReference>
<dbReference type="PANTHER" id="PTHR32315">
    <property type="entry name" value="ADENINE PHOSPHORIBOSYLTRANSFERASE"/>
    <property type="match status" value="1"/>
</dbReference>
<dbReference type="PANTHER" id="PTHR32315:SF3">
    <property type="entry name" value="ADENINE PHOSPHORIBOSYLTRANSFERASE"/>
    <property type="match status" value="1"/>
</dbReference>
<dbReference type="Pfam" id="PF00156">
    <property type="entry name" value="Pribosyltran"/>
    <property type="match status" value="1"/>
</dbReference>
<dbReference type="SUPFAM" id="SSF53271">
    <property type="entry name" value="PRTase-like"/>
    <property type="match status" value="1"/>
</dbReference>
<dbReference type="PROSITE" id="PS00103">
    <property type="entry name" value="PUR_PYR_PR_TRANSFER"/>
    <property type="match status" value="1"/>
</dbReference>
<comment type="function">
    <text evidence="1">Catalyzes a salvage reaction resulting in the formation of AMP, that is energically less costly than de novo synthesis.</text>
</comment>
<comment type="catalytic activity">
    <reaction evidence="1">
        <text>AMP + diphosphate = 5-phospho-alpha-D-ribose 1-diphosphate + adenine</text>
        <dbReference type="Rhea" id="RHEA:16609"/>
        <dbReference type="ChEBI" id="CHEBI:16708"/>
        <dbReference type="ChEBI" id="CHEBI:33019"/>
        <dbReference type="ChEBI" id="CHEBI:58017"/>
        <dbReference type="ChEBI" id="CHEBI:456215"/>
        <dbReference type="EC" id="2.4.2.7"/>
    </reaction>
</comment>
<comment type="pathway">
    <text evidence="1">Purine metabolism; AMP biosynthesis via salvage pathway; AMP from adenine: step 1/1.</text>
</comment>
<comment type="subunit">
    <text evidence="1">Homodimer.</text>
</comment>
<comment type="subcellular location">
    <subcellularLocation>
        <location evidence="1">Cytoplasm</location>
    </subcellularLocation>
</comment>
<comment type="similarity">
    <text evidence="1">Belongs to the purine/pyrimidine phosphoribosyltransferase family.</text>
</comment>
<accession>Q20Y76</accession>
<organism>
    <name type="scientific">Rhodopseudomonas palustris (strain BisB18)</name>
    <dbReference type="NCBI Taxonomy" id="316056"/>
    <lineage>
        <taxon>Bacteria</taxon>
        <taxon>Pseudomonadati</taxon>
        <taxon>Pseudomonadota</taxon>
        <taxon>Alphaproteobacteria</taxon>
        <taxon>Hyphomicrobiales</taxon>
        <taxon>Nitrobacteraceae</taxon>
        <taxon>Rhodopseudomonas</taxon>
    </lineage>
</organism>
<sequence>MTATWKGRLGMSVAAVKDLTMTIAYDLKASVRTIPDYPKPGILFRDITTLLGDARSFRCAIDELVQPWAGSKIDKVAGIEARGFIIGGAIAHQVSSGFVPIRKKGKLPHTTVSMSYALEYGSDIIEMHVDAIKPGERVILVDDLIATGGTAEGAIKLLRQTGAEIVAACFIIDLPELGGAAKIRDMGVPVRALMEFEGH</sequence>
<name>APT_RHOPB</name>
<proteinExistence type="inferred from homology"/>
<gene>
    <name evidence="1" type="primary">apt</name>
    <name type="ordered locus">RPC_4387</name>
</gene>
<evidence type="ECO:0000255" key="1">
    <source>
        <dbReference type="HAMAP-Rule" id="MF_00004"/>
    </source>
</evidence>
<protein>
    <recommendedName>
        <fullName evidence="1">Adenine phosphoribosyltransferase</fullName>
        <shortName evidence="1">APRT</shortName>
        <ecNumber evidence="1">2.4.2.7</ecNumber>
    </recommendedName>
</protein>